<proteinExistence type="inferred from homology"/>
<reference key="1">
    <citation type="journal article" date="2008" name="J. Bacteriol.">
        <title>The complete genome sequence of Escherichia coli DH10B: insights into the biology of a laboratory workhorse.</title>
        <authorList>
            <person name="Durfee T."/>
            <person name="Nelson R."/>
            <person name="Baldwin S."/>
            <person name="Plunkett G. III"/>
            <person name="Burland V."/>
            <person name="Mau B."/>
            <person name="Petrosino J.F."/>
            <person name="Qin X."/>
            <person name="Muzny D.M."/>
            <person name="Ayele M."/>
            <person name="Gibbs R.A."/>
            <person name="Csorgo B."/>
            <person name="Posfai G."/>
            <person name="Weinstock G.M."/>
            <person name="Blattner F.R."/>
        </authorList>
    </citation>
    <scope>NUCLEOTIDE SEQUENCE [LARGE SCALE GENOMIC DNA]</scope>
    <source>
        <strain>K12 / DH10B</strain>
    </source>
</reference>
<sequence>MRIRYGWELALAALLVIEIVAFGAINPRMLDLNMLLFSTSDFICIGIVALPLTMVIVSGGIDISFGSTIGLCAIALGVLFQSGVPMPLAILLTLLLGALCGLINAGLIIYTKVNPLVITLGTLYLFAGSALLLSGMAGATGYEGIGGFPMAFTDFANLDVLGLPVPLIIFLICLLVFWLWLHKTHAGRNVFLIGQSPRVALYSAIPVNRTLCALYAMTGLASAVAAVLLVSYFGSARSDLGASFLMPAITAVVLGGANIYGGSGSIIGTAIAVLLVGYLQQGLQMAGVPNQVSSALSGALLIVVVVGRSVSLHRQQIKEWLARRANNPLP</sequence>
<gene>
    <name type="primary">lsrD</name>
    <name type="ordered locus">ECDH10B_1646</name>
</gene>
<evidence type="ECO:0000250" key="1"/>
<evidence type="ECO:0000255" key="2"/>
<evidence type="ECO:0000305" key="3"/>
<protein>
    <recommendedName>
        <fullName>Autoinducer 2 import system permease protein LsrD</fullName>
        <shortName>AI-2 import system permease protein LsrD</shortName>
    </recommendedName>
</protein>
<feature type="chain" id="PRO_0000351365" description="Autoinducer 2 import system permease protein LsrD">
    <location>
        <begin position="1"/>
        <end position="330"/>
    </location>
</feature>
<feature type="topological domain" description="Cytoplasmic" evidence="2">
    <location>
        <begin position="1"/>
        <end position="4"/>
    </location>
</feature>
<feature type="transmembrane region" description="Helical" evidence="2">
    <location>
        <begin position="5"/>
        <end position="25"/>
    </location>
</feature>
<feature type="topological domain" description="Periplasmic" evidence="2">
    <location>
        <begin position="26"/>
        <end position="42"/>
    </location>
</feature>
<feature type="transmembrane region" description="Helical" evidence="2">
    <location>
        <begin position="43"/>
        <end position="63"/>
    </location>
</feature>
<feature type="topological domain" description="Cytoplasmic" evidence="2">
    <location>
        <begin position="64"/>
        <end position="67"/>
    </location>
</feature>
<feature type="transmembrane region" description="Helical" evidence="2">
    <location>
        <begin position="68"/>
        <end position="88"/>
    </location>
</feature>
<feature type="transmembrane region" description="Helical" evidence="2">
    <location>
        <begin position="89"/>
        <end position="109"/>
    </location>
</feature>
<feature type="topological domain" description="Cytoplasmic" evidence="2">
    <location>
        <begin position="110"/>
        <end position="115"/>
    </location>
</feature>
<feature type="transmembrane region" description="Helical" evidence="2">
    <location>
        <begin position="116"/>
        <end position="136"/>
    </location>
</feature>
<feature type="topological domain" description="Periplasmic" evidence="2">
    <location>
        <begin position="137"/>
        <end position="159"/>
    </location>
</feature>
<feature type="transmembrane region" description="Helical" evidence="2">
    <location>
        <begin position="160"/>
        <end position="180"/>
    </location>
</feature>
<feature type="topological domain" description="Cytoplasmic" evidence="2">
    <location>
        <begin position="181"/>
        <end position="209"/>
    </location>
</feature>
<feature type="transmembrane region" description="Helical" evidence="2">
    <location>
        <begin position="210"/>
        <end position="230"/>
    </location>
</feature>
<feature type="topological domain" description="Periplasmic" evidence="2">
    <location>
        <begin position="231"/>
        <end position="237"/>
    </location>
</feature>
<feature type="transmembrane region" description="Helical" evidence="2">
    <location>
        <begin position="238"/>
        <end position="258"/>
    </location>
</feature>
<feature type="transmembrane region" description="Helical" evidence="2">
    <location>
        <begin position="259"/>
        <end position="279"/>
    </location>
</feature>
<feature type="topological domain" description="Periplasmic" evidence="2">
    <location>
        <begin position="280"/>
        <end position="285"/>
    </location>
</feature>
<feature type="transmembrane region" description="Helical" evidence="2">
    <location>
        <begin position="286"/>
        <end position="306"/>
    </location>
</feature>
<feature type="topological domain" description="Cytoplasmic" evidence="2">
    <location>
        <begin position="307"/>
        <end position="330"/>
    </location>
</feature>
<dbReference type="EMBL" id="CP000948">
    <property type="protein sequence ID" value="ACB02725.1"/>
    <property type="molecule type" value="Genomic_DNA"/>
</dbReference>
<dbReference type="RefSeq" id="WP_001222721.1">
    <property type="nucleotide sequence ID" value="NC_010473.1"/>
</dbReference>
<dbReference type="GeneID" id="75202157"/>
<dbReference type="KEGG" id="ecd:ECDH10B_1646"/>
<dbReference type="HOGENOM" id="CLU_028880_0_0_6"/>
<dbReference type="GO" id="GO:0005886">
    <property type="term" value="C:plasma membrane"/>
    <property type="evidence" value="ECO:0007669"/>
    <property type="project" value="UniProtKB-SubCell"/>
</dbReference>
<dbReference type="GO" id="GO:0022857">
    <property type="term" value="F:transmembrane transporter activity"/>
    <property type="evidence" value="ECO:0007669"/>
    <property type="project" value="InterPro"/>
</dbReference>
<dbReference type="CDD" id="cd06579">
    <property type="entry name" value="TM_PBP1_transp_AraH_like"/>
    <property type="match status" value="1"/>
</dbReference>
<dbReference type="InterPro" id="IPR001851">
    <property type="entry name" value="ABC_transp_permease"/>
</dbReference>
<dbReference type="NCBIfam" id="NF011612">
    <property type="entry name" value="PRK15038.1"/>
    <property type="match status" value="1"/>
</dbReference>
<dbReference type="PANTHER" id="PTHR32196">
    <property type="entry name" value="ABC TRANSPORTER PERMEASE PROTEIN YPHD-RELATED-RELATED"/>
    <property type="match status" value="1"/>
</dbReference>
<dbReference type="PANTHER" id="PTHR32196:SF71">
    <property type="entry name" value="AUTOINDUCER 2 IMPORT SYSTEM PERMEASE PROTEIN LSRD"/>
    <property type="match status" value="1"/>
</dbReference>
<dbReference type="Pfam" id="PF02653">
    <property type="entry name" value="BPD_transp_2"/>
    <property type="match status" value="1"/>
</dbReference>
<name>LSRD_ECODH</name>
<accession>B1XEA3</accession>
<comment type="function">
    <text evidence="1">Part of the ABC transporter complex LsrABCD involved in autoinducer 2 (AI-2) import. Probably responsible for the translocation of the substrate across the membrane (By similarity).</text>
</comment>
<comment type="subunit">
    <text evidence="1">The complex is composed of two ATP-binding proteins (LsrA), two transmembrane proteins (LsrC and LsrD) and a solute-binding protein (LsrB).</text>
</comment>
<comment type="subcellular location">
    <subcellularLocation>
        <location evidence="1">Cell inner membrane</location>
        <topology evidence="1">Multi-pass membrane protein</topology>
    </subcellularLocation>
</comment>
<comment type="similarity">
    <text evidence="3">Belongs to the binding-protein-dependent transport system permease family. AraH/RbsC subfamily.</text>
</comment>
<organism>
    <name type="scientific">Escherichia coli (strain K12 / DH10B)</name>
    <dbReference type="NCBI Taxonomy" id="316385"/>
    <lineage>
        <taxon>Bacteria</taxon>
        <taxon>Pseudomonadati</taxon>
        <taxon>Pseudomonadota</taxon>
        <taxon>Gammaproteobacteria</taxon>
        <taxon>Enterobacterales</taxon>
        <taxon>Enterobacteriaceae</taxon>
        <taxon>Escherichia</taxon>
    </lineage>
</organism>
<keyword id="KW-0997">Cell inner membrane</keyword>
<keyword id="KW-1003">Cell membrane</keyword>
<keyword id="KW-0472">Membrane</keyword>
<keyword id="KW-0812">Transmembrane</keyword>
<keyword id="KW-1133">Transmembrane helix</keyword>
<keyword id="KW-0813">Transport</keyword>